<accession>F4I8X8</accession>
<accession>Q9LPY0</accession>
<proteinExistence type="inferred from homology"/>
<feature type="signal peptide" evidence="3">
    <location>
        <begin position="1"/>
        <end position="22"/>
    </location>
</feature>
<feature type="chain" id="PRO_0000420815" description="Probable dolichyl-diphosphooligosaccharide--protein glycosyltransferase subunit 3A">
    <location>
        <begin position="23"/>
        <end position="343"/>
    </location>
</feature>
<feature type="topological domain" description="Lumenal" evidence="3">
    <location>
        <begin position="23"/>
        <end position="185"/>
    </location>
</feature>
<feature type="transmembrane region" description="Helical" evidence="3">
    <location>
        <begin position="186"/>
        <end position="206"/>
    </location>
</feature>
<feature type="topological domain" description="Cytoplasmic" evidence="3">
    <location>
        <begin position="207"/>
        <end position="220"/>
    </location>
</feature>
<feature type="transmembrane region" description="Helical" evidence="3">
    <location>
        <begin position="221"/>
        <end position="241"/>
    </location>
</feature>
<feature type="topological domain" description="Lumenal" evidence="3">
    <location>
        <begin position="242"/>
        <end position="273"/>
    </location>
</feature>
<feature type="transmembrane region" description="Helical" evidence="3">
    <location>
        <begin position="274"/>
        <end position="294"/>
    </location>
</feature>
<feature type="topological domain" description="Cytoplasmic" evidence="3">
    <location>
        <begin position="295"/>
        <end position="304"/>
    </location>
</feature>
<feature type="transmembrane region" description="Helical" evidence="3">
    <location>
        <begin position="305"/>
        <end position="325"/>
    </location>
</feature>
<feature type="topological domain" description="Lumenal" evidence="3">
    <location>
        <begin position="326"/>
        <end position="343"/>
    </location>
</feature>
<feature type="glycosylation site" description="N-linked (GlcNAc...) asparagine" evidence="3">
    <location>
        <position position="105"/>
    </location>
</feature>
<feature type="glycosylation site" description="N-linked (GlcNAc...) asparagine" evidence="3">
    <location>
        <position position="108"/>
    </location>
</feature>
<feature type="glycosylation site" description="N-linked (GlcNAc...) asparagine" evidence="3">
    <location>
        <position position="146"/>
    </location>
</feature>
<sequence>MVIQTNLSYRFFILIVFLFTLANPKSDSDLKNELVSLRSTAESGVISFNNDDVSKFITSVSTPRPYSLIIFFDAVHLHGNSQLRLPEFRREFRLVSATFITNNNNESNGTKLFFCEIESTHSEASFRRFAVESLPHISLVSPTTENLTESDQMDGGDFTGLAESMAEFVERQTKLTVCSIQRPPLISKTQIGIIVAIIIISTPILIKKILKGETLLHDHRIWLVGAVFVYFFSVSGTMHNIIREMPMYIKDYEDSSKFVFFIEESEMQLGAEGFFVGFLYTVVGLLLAFVTNVVVRVKKLDEQRMAMLLALSISFWAVRKVVYLDNWKTGYEIYPYWPSSWRG</sequence>
<reference key="1">
    <citation type="journal article" date="2000" name="Nature">
        <title>Sequence and analysis of chromosome 1 of the plant Arabidopsis thaliana.</title>
        <authorList>
            <person name="Theologis A."/>
            <person name="Ecker J.R."/>
            <person name="Palm C.J."/>
            <person name="Federspiel N.A."/>
            <person name="Kaul S."/>
            <person name="White O."/>
            <person name="Alonso J."/>
            <person name="Altafi H."/>
            <person name="Araujo R."/>
            <person name="Bowman C.L."/>
            <person name="Brooks S.Y."/>
            <person name="Buehler E."/>
            <person name="Chan A."/>
            <person name="Chao Q."/>
            <person name="Chen H."/>
            <person name="Cheuk R.F."/>
            <person name="Chin C.W."/>
            <person name="Chung M.K."/>
            <person name="Conn L."/>
            <person name="Conway A.B."/>
            <person name="Conway A.R."/>
            <person name="Creasy T.H."/>
            <person name="Dewar K."/>
            <person name="Dunn P."/>
            <person name="Etgu P."/>
            <person name="Feldblyum T.V."/>
            <person name="Feng J.-D."/>
            <person name="Fong B."/>
            <person name="Fujii C.Y."/>
            <person name="Gill J.E."/>
            <person name="Goldsmith A.D."/>
            <person name="Haas B."/>
            <person name="Hansen N.F."/>
            <person name="Hughes B."/>
            <person name="Huizar L."/>
            <person name="Hunter J.L."/>
            <person name="Jenkins J."/>
            <person name="Johnson-Hopson C."/>
            <person name="Khan S."/>
            <person name="Khaykin E."/>
            <person name="Kim C.J."/>
            <person name="Koo H.L."/>
            <person name="Kremenetskaia I."/>
            <person name="Kurtz D.B."/>
            <person name="Kwan A."/>
            <person name="Lam B."/>
            <person name="Langin-Hooper S."/>
            <person name="Lee A."/>
            <person name="Lee J.M."/>
            <person name="Lenz C.A."/>
            <person name="Li J.H."/>
            <person name="Li Y.-P."/>
            <person name="Lin X."/>
            <person name="Liu S.X."/>
            <person name="Liu Z.A."/>
            <person name="Luros J.S."/>
            <person name="Maiti R."/>
            <person name="Marziali A."/>
            <person name="Militscher J."/>
            <person name="Miranda M."/>
            <person name="Nguyen M."/>
            <person name="Nierman W.C."/>
            <person name="Osborne B.I."/>
            <person name="Pai G."/>
            <person name="Peterson J."/>
            <person name="Pham P.K."/>
            <person name="Rizzo M."/>
            <person name="Rooney T."/>
            <person name="Rowley D."/>
            <person name="Sakano H."/>
            <person name="Salzberg S.L."/>
            <person name="Schwartz J.R."/>
            <person name="Shinn P."/>
            <person name="Southwick A.M."/>
            <person name="Sun H."/>
            <person name="Tallon L.J."/>
            <person name="Tambunga G."/>
            <person name="Toriumi M.J."/>
            <person name="Town C.D."/>
            <person name="Utterback T."/>
            <person name="Van Aken S."/>
            <person name="Vaysberg M."/>
            <person name="Vysotskaia V.S."/>
            <person name="Walker M."/>
            <person name="Wu D."/>
            <person name="Yu G."/>
            <person name="Fraser C.M."/>
            <person name="Venter J.C."/>
            <person name="Davis R.W."/>
        </authorList>
    </citation>
    <scope>NUCLEOTIDE SEQUENCE [LARGE SCALE GENOMIC DNA]</scope>
    <source>
        <strain>cv. Columbia</strain>
    </source>
</reference>
<reference key="2">
    <citation type="journal article" date="2017" name="Plant J.">
        <title>Araport11: a complete reannotation of the Arabidopsis thaliana reference genome.</title>
        <authorList>
            <person name="Cheng C.Y."/>
            <person name="Krishnakumar V."/>
            <person name="Chan A.P."/>
            <person name="Thibaud-Nissen F."/>
            <person name="Schobel S."/>
            <person name="Town C.D."/>
        </authorList>
    </citation>
    <scope>GENOME REANNOTATION</scope>
    <source>
        <strain>cv. Columbia</strain>
    </source>
</reference>
<dbReference type="EMBL" id="AC011661">
    <property type="protein sequence ID" value="AAF16635.1"/>
    <property type="status" value="ALT_SEQ"/>
    <property type="molecule type" value="Genomic_DNA"/>
</dbReference>
<dbReference type="EMBL" id="CP002684">
    <property type="protein sequence ID" value="AEE28751.1"/>
    <property type="molecule type" value="Genomic_DNA"/>
</dbReference>
<dbReference type="PIR" id="H86248">
    <property type="entry name" value="H86248"/>
</dbReference>
<dbReference type="RefSeq" id="NP_172622.1">
    <property type="nucleotide sequence ID" value="NM_101029.2"/>
</dbReference>
<dbReference type="SMR" id="F4I8X8"/>
<dbReference type="BioGRID" id="22939">
    <property type="interactions" value="1"/>
</dbReference>
<dbReference type="FunCoup" id="F4I8X8">
    <property type="interactions" value="1019"/>
</dbReference>
<dbReference type="STRING" id="3702.F4I8X8"/>
<dbReference type="GlyCosmos" id="F4I8X8">
    <property type="glycosylation" value="3 sites, No reported glycans"/>
</dbReference>
<dbReference type="GlyGen" id="F4I8X8">
    <property type="glycosylation" value="3 sites"/>
</dbReference>
<dbReference type="PaxDb" id="3702-AT1G11560.1"/>
<dbReference type="ProteomicsDB" id="226037"/>
<dbReference type="EnsemblPlants" id="AT1G11560.1">
    <property type="protein sequence ID" value="AT1G11560.1"/>
    <property type="gene ID" value="AT1G11560"/>
</dbReference>
<dbReference type="GeneID" id="837699"/>
<dbReference type="Gramene" id="AT1G11560.1">
    <property type="protein sequence ID" value="AT1G11560.1"/>
    <property type="gene ID" value="AT1G11560"/>
</dbReference>
<dbReference type="KEGG" id="ath:AT1G11560"/>
<dbReference type="Araport" id="AT1G11560"/>
<dbReference type="TAIR" id="AT1G11560"/>
<dbReference type="eggNOG" id="KOG2603">
    <property type="taxonomic scope" value="Eukaryota"/>
</dbReference>
<dbReference type="HOGENOM" id="CLU_046478_0_0_1"/>
<dbReference type="InParanoid" id="F4I8X8"/>
<dbReference type="OMA" id="FIEESEM"/>
<dbReference type="PRO" id="PR:F4I8X8"/>
<dbReference type="Proteomes" id="UP000006548">
    <property type="component" value="Chromosome 1"/>
</dbReference>
<dbReference type="ExpressionAtlas" id="F4I8X8">
    <property type="expression patterns" value="baseline and differential"/>
</dbReference>
<dbReference type="GO" id="GO:0005789">
    <property type="term" value="C:endoplasmic reticulum membrane"/>
    <property type="evidence" value="ECO:0007669"/>
    <property type="project" value="UniProtKB-SubCell"/>
</dbReference>
<dbReference type="FunFam" id="3.40.30.10:FF:000205">
    <property type="entry name" value="Probable dolichyl-diphosphooligosaccharide--protein glycosyltransferase subunit 3"/>
    <property type="match status" value="1"/>
</dbReference>
<dbReference type="Gene3D" id="3.40.30.10">
    <property type="entry name" value="Glutaredoxin"/>
    <property type="match status" value="1"/>
</dbReference>
<dbReference type="InterPro" id="IPR021149">
    <property type="entry name" value="OligosaccharylTrfase_OST3/OST6"/>
</dbReference>
<dbReference type="PANTHER" id="PTHR12692">
    <property type="entry name" value="DOLICHYL-DIPHOSPHOOLIGOSACCHARIDE--PROTEIN GLYCOSYLTRANSFERASE-RELATED"/>
    <property type="match status" value="1"/>
</dbReference>
<dbReference type="PANTHER" id="PTHR12692:SF0">
    <property type="entry name" value="GH11935P"/>
    <property type="match status" value="1"/>
</dbReference>
<dbReference type="Pfam" id="PF04756">
    <property type="entry name" value="OST3_OST6"/>
    <property type="match status" value="1"/>
</dbReference>
<evidence type="ECO:0000250" key="1"/>
<evidence type="ECO:0000250" key="2">
    <source>
        <dbReference type="UniProtKB" id="P48439"/>
    </source>
</evidence>
<evidence type="ECO:0000255" key="3"/>
<evidence type="ECO:0000305" key="4"/>
<gene>
    <name type="primary">OST3A</name>
    <name type="ordered locus">At1g11560</name>
    <name type="ORF">T23J18.22</name>
</gene>
<protein>
    <recommendedName>
        <fullName>Probable dolichyl-diphosphooligosaccharide--protein glycosyltransferase subunit 3A</fullName>
    </recommendedName>
</protein>
<comment type="function">
    <text evidence="2">Subunit of the oligosaccharyl transferase (OST) complex that catalyzes the initial transfer of a defined glycan (Glc(3)Man(9)GlcNAc(2) in eukaryotes) from the lipid carrier dolichol-pyrophosphate to an asparagine residue within an Asn-X-Ser/Thr consensus motif in nascent polypeptide chains, the first step in protein N-glycosylation. N-glycosylation occurs cotranslationally and the complex associates with the Sec61 complex at the channel-forming translocon complex that mediates protein translocation across the endoplasmic reticulum (ER). All subunits are required for a maximal enzyme activity.</text>
</comment>
<comment type="subunit">
    <text evidence="2">Component of the oligosaccharyltransferase (OST) complex.</text>
</comment>
<comment type="subcellular location">
    <subcellularLocation>
        <location evidence="1">Endoplasmic reticulum membrane</location>
        <topology evidence="1">Multi-pass membrane protein</topology>
    </subcellularLocation>
</comment>
<comment type="similarity">
    <text evidence="4">Belongs to the OST3/OST6 family.</text>
</comment>
<comment type="sequence caution" evidence="4">
    <conflict type="erroneous gene model prediction">
        <sequence resource="EMBL-CDS" id="AAF16635"/>
    </conflict>
</comment>
<name>OST3A_ARATH</name>
<organism>
    <name type="scientific">Arabidopsis thaliana</name>
    <name type="common">Mouse-ear cress</name>
    <dbReference type="NCBI Taxonomy" id="3702"/>
    <lineage>
        <taxon>Eukaryota</taxon>
        <taxon>Viridiplantae</taxon>
        <taxon>Streptophyta</taxon>
        <taxon>Embryophyta</taxon>
        <taxon>Tracheophyta</taxon>
        <taxon>Spermatophyta</taxon>
        <taxon>Magnoliopsida</taxon>
        <taxon>eudicotyledons</taxon>
        <taxon>Gunneridae</taxon>
        <taxon>Pentapetalae</taxon>
        <taxon>rosids</taxon>
        <taxon>malvids</taxon>
        <taxon>Brassicales</taxon>
        <taxon>Brassicaceae</taxon>
        <taxon>Camelineae</taxon>
        <taxon>Arabidopsis</taxon>
    </lineage>
</organism>
<keyword id="KW-0256">Endoplasmic reticulum</keyword>
<keyword id="KW-0325">Glycoprotein</keyword>
<keyword id="KW-0472">Membrane</keyword>
<keyword id="KW-1185">Reference proteome</keyword>
<keyword id="KW-0732">Signal</keyword>
<keyword id="KW-0812">Transmembrane</keyword>
<keyword id="KW-1133">Transmembrane helix</keyword>